<reference key="1">
    <citation type="journal article" date="2004" name="Nature">
        <title>Genome evolution in yeasts.</title>
        <authorList>
            <person name="Dujon B."/>
            <person name="Sherman D."/>
            <person name="Fischer G."/>
            <person name="Durrens P."/>
            <person name="Casaregola S."/>
            <person name="Lafontaine I."/>
            <person name="de Montigny J."/>
            <person name="Marck C."/>
            <person name="Neuveglise C."/>
            <person name="Talla E."/>
            <person name="Goffard N."/>
            <person name="Frangeul L."/>
            <person name="Aigle M."/>
            <person name="Anthouard V."/>
            <person name="Babour A."/>
            <person name="Barbe V."/>
            <person name="Barnay S."/>
            <person name="Blanchin S."/>
            <person name="Beckerich J.-M."/>
            <person name="Beyne E."/>
            <person name="Bleykasten C."/>
            <person name="Boisrame A."/>
            <person name="Boyer J."/>
            <person name="Cattolico L."/>
            <person name="Confanioleri F."/>
            <person name="de Daruvar A."/>
            <person name="Despons L."/>
            <person name="Fabre E."/>
            <person name="Fairhead C."/>
            <person name="Ferry-Dumazet H."/>
            <person name="Groppi A."/>
            <person name="Hantraye F."/>
            <person name="Hennequin C."/>
            <person name="Jauniaux N."/>
            <person name="Joyet P."/>
            <person name="Kachouri R."/>
            <person name="Kerrest A."/>
            <person name="Koszul R."/>
            <person name="Lemaire M."/>
            <person name="Lesur I."/>
            <person name="Ma L."/>
            <person name="Muller H."/>
            <person name="Nicaud J.-M."/>
            <person name="Nikolski M."/>
            <person name="Oztas S."/>
            <person name="Ozier-Kalogeropoulos O."/>
            <person name="Pellenz S."/>
            <person name="Potier S."/>
            <person name="Richard G.-F."/>
            <person name="Straub M.-L."/>
            <person name="Suleau A."/>
            <person name="Swennen D."/>
            <person name="Tekaia F."/>
            <person name="Wesolowski-Louvel M."/>
            <person name="Westhof E."/>
            <person name="Wirth B."/>
            <person name="Zeniou-Meyer M."/>
            <person name="Zivanovic Y."/>
            <person name="Bolotin-Fukuhara M."/>
            <person name="Thierry A."/>
            <person name="Bouchier C."/>
            <person name="Caudron B."/>
            <person name="Scarpelli C."/>
            <person name="Gaillardin C."/>
            <person name="Weissenbach J."/>
            <person name="Wincker P."/>
            <person name="Souciet J.-L."/>
        </authorList>
    </citation>
    <scope>NUCLEOTIDE SEQUENCE [LARGE SCALE GENOMIC DNA]</scope>
    <source>
        <strain>CLIB 122 / E 150</strain>
    </source>
</reference>
<proteinExistence type="inferred from homology"/>
<name>AF9_YARLI</name>
<sequence length="202" mass="22826">MAAGASLKRIKEASPTPETNHELGFIKKVVFKLHDTYANSTRTIEEPPFEVTETGWGEFEISIRIFFPTEMGEKNILLYHHLKLHPYKKDNIPAQIGAPGGAPNANEDEENTNVPQPVDSYVYDELVFNEPSEQMFELLTSRPGALLPAKSDPNDPSKSYSLQTEAEELDRLTAGLETVYQQVQKTKEYILQLEKEKETLSQ</sequence>
<feature type="chain" id="PRO_0000215933" description="Protein AF-9 homolog">
    <location>
        <begin position="1"/>
        <end position="202"/>
    </location>
</feature>
<feature type="domain" description="YEATS" evidence="3">
    <location>
        <begin position="1"/>
        <end position="142"/>
    </location>
</feature>
<feature type="region of interest" description="Disordered" evidence="4">
    <location>
        <begin position="94"/>
        <end position="113"/>
    </location>
</feature>
<feature type="coiled-coil region" evidence="2">
    <location>
        <begin position="161"/>
        <end position="202"/>
    </location>
</feature>
<organism>
    <name type="scientific">Yarrowia lipolytica (strain CLIB 122 / E 150)</name>
    <name type="common">Yeast</name>
    <name type="synonym">Candida lipolytica</name>
    <dbReference type="NCBI Taxonomy" id="284591"/>
    <lineage>
        <taxon>Eukaryota</taxon>
        <taxon>Fungi</taxon>
        <taxon>Dikarya</taxon>
        <taxon>Ascomycota</taxon>
        <taxon>Saccharomycotina</taxon>
        <taxon>Dipodascomycetes</taxon>
        <taxon>Dipodascales</taxon>
        <taxon>Dipodascales incertae sedis</taxon>
        <taxon>Yarrowia</taxon>
    </lineage>
</organism>
<dbReference type="EMBL" id="CR382128">
    <property type="protein sequence ID" value="CAG82984.1"/>
    <property type="molecule type" value="Genomic_DNA"/>
</dbReference>
<dbReference type="RefSeq" id="XP_500738.1">
    <property type="nucleotide sequence ID" value="XM_500738.1"/>
</dbReference>
<dbReference type="SMR" id="Q6CF24"/>
<dbReference type="FunCoup" id="Q6CF24">
    <property type="interactions" value="744"/>
</dbReference>
<dbReference type="STRING" id="284591.Q6CF24"/>
<dbReference type="EnsemblFungi" id="CAG82984">
    <property type="protein sequence ID" value="CAG82984"/>
    <property type="gene ID" value="YALI0_B10912g"/>
</dbReference>
<dbReference type="VEuPathDB" id="FungiDB:YALI0_B10912g"/>
<dbReference type="HOGENOM" id="CLU_051385_2_1_1"/>
<dbReference type="InParanoid" id="Q6CF24"/>
<dbReference type="OrthoDB" id="44983at4891"/>
<dbReference type="Proteomes" id="UP000001300">
    <property type="component" value="Chromosome B"/>
</dbReference>
<dbReference type="GO" id="GO:0005737">
    <property type="term" value="C:cytoplasm"/>
    <property type="evidence" value="ECO:0007669"/>
    <property type="project" value="UniProtKB-SubCell"/>
</dbReference>
<dbReference type="GO" id="GO:0035267">
    <property type="term" value="C:NuA4 histone acetyltransferase complex"/>
    <property type="evidence" value="ECO:0000318"/>
    <property type="project" value="GO_Central"/>
</dbReference>
<dbReference type="GO" id="GO:0005634">
    <property type="term" value="C:nucleus"/>
    <property type="evidence" value="ECO:0000318"/>
    <property type="project" value="GO_Central"/>
</dbReference>
<dbReference type="GO" id="GO:0000812">
    <property type="term" value="C:Swr1 complex"/>
    <property type="evidence" value="ECO:0000318"/>
    <property type="project" value="GO_Central"/>
</dbReference>
<dbReference type="GO" id="GO:0042393">
    <property type="term" value="F:histone binding"/>
    <property type="evidence" value="ECO:0000318"/>
    <property type="project" value="GO_Central"/>
</dbReference>
<dbReference type="GO" id="GO:0006338">
    <property type="term" value="P:chromatin remodeling"/>
    <property type="evidence" value="ECO:0000318"/>
    <property type="project" value="GO_Central"/>
</dbReference>
<dbReference type="GO" id="GO:0006281">
    <property type="term" value="P:DNA repair"/>
    <property type="evidence" value="ECO:0007669"/>
    <property type="project" value="UniProtKB-KW"/>
</dbReference>
<dbReference type="GO" id="GO:0006357">
    <property type="term" value="P:regulation of transcription by RNA polymerase II"/>
    <property type="evidence" value="ECO:0000318"/>
    <property type="project" value="GO_Central"/>
</dbReference>
<dbReference type="Gene3D" id="2.60.40.1970">
    <property type="entry name" value="YEATS domain"/>
    <property type="match status" value="1"/>
</dbReference>
<dbReference type="InterPro" id="IPR038704">
    <property type="entry name" value="YEAST_sf"/>
</dbReference>
<dbReference type="InterPro" id="IPR005033">
    <property type="entry name" value="YEATS"/>
</dbReference>
<dbReference type="InterPro" id="IPR055129">
    <property type="entry name" value="YEATS_dom"/>
</dbReference>
<dbReference type="PANTHER" id="PTHR47573">
    <property type="entry name" value="PROTEIN AF-9 HOMOLOG"/>
    <property type="match status" value="1"/>
</dbReference>
<dbReference type="PANTHER" id="PTHR47573:SF1">
    <property type="entry name" value="PROTEIN AF-9 HOMOLOG"/>
    <property type="match status" value="1"/>
</dbReference>
<dbReference type="Pfam" id="PF03366">
    <property type="entry name" value="YEATS"/>
    <property type="match status" value="1"/>
</dbReference>
<dbReference type="PROSITE" id="PS51037">
    <property type="entry name" value="YEATS"/>
    <property type="match status" value="1"/>
</dbReference>
<evidence type="ECO:0000250" key="1"/>
<evidence type="ECO:0000255" key="2"/>
<evidence type="ECO:0000255" key="3">
    <source>
        <dbReference type="PROSITE-ProRule" id="PRU00376"/>
    </source>
</evidence>
<evidence type="ECO:0000256" key="4">
    <source>
        <dbReference type="SAM" id="MobiDB-lite"/>
    </source>
</evidence>
<evidence type="ECO:0000305" key="5"/>
<keyword id="KW-0010">Activator</keyword>
<keyword id="KW-0156">Chromatin regulator</keyword>
<keyword id="KW-0175">Coiled coil</keyword>
<keyword id="KW-0963">Cytoplasm</keyword>
<keyword id="KW-0227">DNA damage</keyword>
<keyword id="KW-0234">DNA repair</keyword>
<keyword id="KW-0539">Nucleus</keyword>
<keyword id="KW-1185">Reference proteome</keyword>
<keyword id="KW-0804">Transcription</keyword>
<keyword id="KW-0805">Transcription regulation</keyword>
<protein>
    <recommendedName>
        <fullName>Protein AF-9 homolog</fullName>
    </recommendedName>
</protein>
<comment type="function">
    <text evidence="1">Component of the SWR1 complex which mediates the ATP-dependent exchange of histone H2A for the H2A variant HZT1 leading to transcriptional regulation of selected genes by chromatin remodeling. Component of the NuA4 histone acetyltransferase complex which is involved in transcriptional activation of selected genes principally by acetylation of nucleosomal histones H4 and H2A. The NuA4 complex is also involved in DNA repair. Yaf9 may also be required for viability in conditions in which the structural integrity of the spindle is compromised (By similarity).</text>
</comment>
<comment type="subunit">
    <text evidence="1">Component of the SWR1 chromatin-remodeling complex and of the NuA4 histone acetyltransferase complex.</text>
</comment>
<comment type="subcellular location">
    <subcellularLocation>
        <location evidence="1">Cytoplasm</location>
    </subcellularLocation>
    <subcellularLocation>
        <location evidence="3">Nucleus</location>
    </subcellularLocation>
</comment>
<comment type="domain">
    <text evidence="1">The coiled-coil domain is required for assembly into the NuA4 complex.</text>
</comment>
<comment type="similarity">
    <text evidence="5">Belongs to the YAF9 family.</text>
</comment>
<accession>Q6CF24</accession>
<gene>
    <name type="primary">YAF9</name>
    <name type="ordered locus">YALI0B10912g</name>
</gene>